<comment type="function">
    <text evidence="1">Peptide chain release factor 1 directs the termination of translation in response to the peptide chain termination codons UAG and UAA.</text>
</comment>
<comment type="subcellular location">
    <subcellularLocation>
        <location evidence="1">Cytoplasm</location>
    </subcellularLocation>
</comment>
<comment type="PTM">
    <text evidence="1">Methylated by PrmC. Methylation increases the termination efficiency of RF1.</text>
</comment>
<comment type="similarity">
    <text evidence="1">Belongs to the prokaryotic/mitochondrial release factor family.</text>
</comment>
<name>RF1_BORAP</name>
<accession>Q0SNW8</accession>
<accession>G0IR39</accession>
<keyword id="KW-0963">Cytoplasm</keyword>
<keyword id="KW-0488">Methylation</keyword>
<keyword id="KW-0648">Protein biosynthesis</keyword>
<organism>
    <name type="scientific">Borreliella afzelii (strain PKo)</name>
    <name type="common">Borrelia afzelii</name>
    <dbReference type="NCBI Taxonomy" id="390236"/>
    <lineage>
        <taxon>Bacteria</taxon>
        <taxon>Pseudomonadati</taxon>
        <taxon>Spirochaetota</taxon>
        <taxon>Spirochaetia</taxon>
        <taxon>Spirochaetales</taxon>
        <taxon>Borreliaceae</taxon>
        <taxon>Borreliella</taxon>
    </lineage>
</organism>
<reference key="1">
    <citation type="journal article" date="2006" name="BMC Genomics">
        <title>Comparative genome analysis: selection pressure on the Borrelia vls cassettes is essential for infectivity.</title>
        <authorList>
            <person name="Gloeckner G."/>
            <person name="Schulte-Spechtel U."/>
            <person name="Schilhabel M."/>
            <person name="Felder M."/>
            <person name="Suehnel J."/>
            <person name="Wilske B."/>
            <person name="Platzer M."/>
        </authorList>
    </citation>
    <scope>NUCLEOTIDE SEQUENCE [LARGE SCALE GENOMIC DNA]</scope>
    <source>
        <strain>PKo</strain>
    </source>
</reference>
<reference key="2">
    <citation type="journal article" date="2011" name="J. Bacteriol.">
        <title>Whole-genome sequences of two Borrelia afzelii and two Borrelia garinii Lyme disease agent isolates.</title>
        <authorList>
            <person name="Casjens S.R."/>
            <person name="Mongodin E.F."/>
            <person name="Qiu W.G."/>
            <person name="Dunn J.J."/>
            <person name="Luft B.J."/>
            <person name="Fraser-Liggett C.M."/>
            <person name="Schutzer S.E."/>
        </authorList>
    </citation>
    <scope>NUCLEOTIDE SEQUENCE [LARGE SCALE GENOMIC DNA]</scope>
    <source>
        <strain>PKo</strain>
    </source>
</reference>
<proteinExistence type="inferred from homology"/>
<feature type="chain" id="PRO_0000263241" description="Peptide chain release factor 1">
    <location>
        <begin position="1"/>
        <end position="357"/>
    </location>
</feature>
<feature type="region of interest" description="Disordered" evidence="2">
    <location>
        <begin position="282"/>
        <end position="313"/>
    </location>
</feature>
<feature type="modified residue" description="N5-methylglutamine" evidence="1">
    <location>
        <position position="234"/>
    </location>
</feature>
<protein>
    <recommendedName>
        <fullName evidence="1">Peptide chain release factor 1</fullName>
        <shortName evidence="1">RF-1</shortName>
    </recommendedName>
</protein>
<sequence>MFLEKLNSATSRIKSIEEKLQDINLIKNQKKYSKIIKEYTYLEKINTKKIEYENILNQINDNKTILEKEEQQEMKELIKQELIDLDKKKENLEHEIKILLLPQDENDSKNIIIEIRAGTGGEEAALFANNLYSMYIKYSEKKKWKTEIINFNETELGGFKEIIFEIKGKDVFKKLKYESGVHRVQRIPITESNGRLQTSAATVAVLPNIEETEIDINEKDLRIDVYRSSGAGGQHVNTTDSAVRITHLPTGIVVQCQNERSQHKNKDQAMKILRARLYEFEDSKKQEQRSNNRKQQVGSGDRSERIRTYNFPQNRITDHRANITLYKLEEFMQGELDQLLDPLTIELQEQTLKSNNI</sequence>
<evidence type="ECO:0000255" key="1">
    <source>
        <dbReference type="HAMAP-Rule" id="MF_00093"/>
    </source>
</evidence>
<evidence type="ECO:0000256" key="2">
    <source>
        <dbReference type="SAM" id="MobiDB-lite"/>
    </source>
</evidence>
<gene>
    <name evidence="1" type="primary">prfA</name>
    <name type="ordered locus">BAPKO_0198</name>
    <name type="ordered locus">BafPKo_0192</name>
</gene>
<dbReference type="EMBL" id="CP000395">
    <property type="protein sequence ID" value="ABH01460.1"/>
    <property type="molecule type" value="Genomic_DNA"/>
</dbReference>
<dbReference type="EMBL" id="CP002933">
    <property type="protein sequence ID" value="AEL69425.1"/>
    <property type="molecule type" value="Genomic_DNA"/>
</dbReference>
<dbReference type="RefSeq" id="WP_011600883.1">
    <property type="nucleotide sequence ID" value="NZ_CP160066.1"/>
</dbReference>
<dbReference type="SMR" id="Q0SNW8"/>
<dbReference type="STRING" id="29518.BLA32_03335"/>
<dbReference type="GeneID" id="77265034"/>
<dbReference type="KEGG" id="baf:BAPKO_0198"/>
<dbReference type="KEGG" id="bafz:BafPKo_0192"/>
<dbReference type="PATRIC" id="fig|390236.22.peg.191"/>
<dbReference type="eggNOG" id="COG0216">
    <property type="taxonomic scope" value="Bacteria"/>
</dbReference>
<dbReference type="HOGENOM" id="CLU_036856_0_1_12"/>
<dbReference type="OrthoDB" id="9806673at2"/>
<dbReference type="Proteomes" id="UP000005216">
    <property type="component" value="Chromosome"/>
</dbReference>
<dbReference type="GO" id="GO:0005737">
    <property type="term" value="C:cytoplasm"/>
    <property type="evidence" value="ECO:0007669"/>
    <property type="project" value="UniProtKB-SubCell"/>
</dbReference>
<dbReference type="GO" id="GO:0016149">
    <property type="term" value="F:translation release factor activity, codon specific"/>
    <property type="evidence" value="ECO:0007669"/>
    <property type="project" value="UniProtKB-UniRule"/>
</dbReference>
<dbReference type="FunFam" id="3.30.160.20:FF:000004">
    <property type="entry name" value="Peptide chain release factor 1"/>
    <property type="match status" value="1"/>
</dbReference>
<dbReference type="FunFam" id="3.30.70.1660:FF:000002">
    <property type="entry name" value="Peptide chain release factor 1"/>
    <property type="match status" value="1"/>
</dbReference>
<dbReference type="FunFam" id="3.30.70.1660:FF:000004">
    <property type="entry name" value="Peptide chain release factor 1"/>
    <property type="match status" value="1"/>
</dbReference>
<dbReference type="Gene3D" id="3.30.160.20">
    <property type="match status" value="1"/>
</dbReference>
<dbReference type="Gene3D" id="3.30.70.1660">
    <property type="match status" value="2"/>
</dbReference>
<dbReference type="Gene3D" id="6.10.140.1950">
    <property type="match status" value="1"/>
</dbReference>
<dbReference type="HAMAP" id="MF_00093">
    <property type="entry name" value="Rel_fac_1"/>
    <property type="match status" value="1"/>
</dbReference>
<dbReference type="InterPro" id="IPR005139">
    <property type="entry name" value="PCRF"/>
</dbReference>
<dbReference type="InterPro" id="IPR000352">
    <property type="entry name" value="Pep_chain_release_fac_I"/>
</dbReference>
<dbReference type="InterPro" id="IPR045853">
    <property type="entry name" value="Pep_chain_release_fac_I_sf"/>
</dbReference>
<dbReference type="InterPro" id="IPR050057">
    <property type="entry name" value="Prokaryotic/Mito_RF"/>
</dbReference>
<dbReference type="InterPro" id="IPR004373">
    <property type="entry name" value="RF-1"/>
</dbReference>
<dbReference type="NCBIfam" id="TIGR00019">
    <property type="entry name" value="prfA"/>
    <property type="match status" value="1"/>
</dbReference>
<dbReference type="NCBIfam" id="NF001859">
    <property type="entry name" value="PRK00591.1"/>
    <property type="match status" value="1"/>
</dbReference>
<dbReference type="PANTHER" id="PTHR43804">
    <property type="entry name" value="LD18447P"/>
    <property type="match status" value="1"/>
</dbReference>
<dbReference type="PANTHER" id="PTHR43804:SF7">
    <property type="entry name" value="LD18447P"/>
    <property type="match status" value="1"/>
</dbReference>
<dbReference type="Pfam" id="PF03462">
    <property type="entry name" value="PCRF"/>
    <property type="match status" value="1"/>
</dbReference>
<dbReference type="Pfam" id="PF00472">
    <property type="entry name" value="RF-1"/>
    <property type="match status" value="1"/>
</dbReference>
<dbReference type="SMART" id="SM00937">
    <property type="entry name" value="PCRF"/>
    <property type="match status" value="1"/>
</dbReference>
<dbReference type="SUPFAM" id="SSF75620">
    <property type="entry name" value="Release factor"/>
    <property type="match status" value="1"/>
</dbReference>
<dbReference type="PROSITE" id="PS00745">
    <property type="entry name" value="RF_PROK_I"/>
    <property type="match status" value="1"/>
</dbReference>